<dbReference type="EMBL" id="CP000488">
    <property type="protein sequence ID" value="ABL02632.1"/>
    <property type="molecule type" value="Genomic_DNA"/>
</dbReference>
<dbReference type="RefSeq" id="WP_011738257.1">
    <property type="nucleotide sequence ID" value="NC_008610.1"/>
</dbReference>
<dbReference type="SMR" id="A1AXH5"/>
<dbReference type="STRING" id="413404.Rmag_0919"/>
<dbReference type="KEGG" id="rma:Rmag_0919"/>
<dbReference type="eggNOG" id="COG0261">
    <property type="taxonomic scope" value="Bacteria"/>
</dbReference>
<dbReference type="HOGENOM" id="CLU_061463_3_1_6"/>
<dbReference type="OrthoDB" id="9813334at2"/>
<dbReference type="Proteomes" id="UP000002587">
    <property type="component" value="Chromosome"/>
</dbReference>
<dbReference type="GO" id="GO:0005737">
    <property type="term" value="C:cytoplasm"/>
    <property type="evidence" value="ECO:0007669"/>
    <property type="project" value="UniProtKB-ARBA"/>
</dbReference>
<dbReference type="GO" id="GO:1990904">
    <property type="term" value="C:ribonucleoprotein complex"/>
    <property type="evidence" value="ECO:0007669"/>
    <property type="project" value="UniProtKB-KW"/>
</dbReference>
<dbReference type="GO" id="GO:0005840">
    <property type="term" value="C:ribosome"/>
    <property type="evidence" value="ECO:0007669"/>
    <property type="project" value="UniProtKB-KW"/>
</dbReference>
<dbReference type="GO" id="GO:0019843">
    <property type="term" value="F:rRNA binding"/>
    <property type="evidence" value="ECO:0007669"/>
    <property type="project" value="UniProtKB-UniRule"/>
</dbReference>
<dbReference type="GO" id="GO:0003735">
    <property type="term" value="F:structural constituent of ribosome"/>
    <property type="evidence" value="ECO:0007669"/>
    <property type="project" value="InterPro"/>
</dbReference>
<dbReference type="GO" id="GO:0006412">
    <property type="term" value="P:translation"/>
    <property type="evidence" value="ECO:0007669"/>
    <property type="project" value="UniProtKB-UniRule"/>
</dbReference>
<dbReference type="HAMAP" id="MF_01363">
    <property type="entry name" value="Ribosomal_bL21"/>
    <property type="match status" value="1"/>
</dbReference>
<dbReference type="InterPro" id="IPR028909">
    <property type="entry name" value="bL21-like"/>
</dbReference>
<dbReference type="InterPro" id="IPR036164">
    <property type="entry name" value="bL21-like_sf"/>
</dbReference>
<dbReference type="InterPro" id="IPR001787">
    <property type="entry name" value="Ribosomal_bL21"/>
</dbReference>
<dbReference type="InterPro" id="IPR018258">
    <property type="entry name" value="Ribosomal_bL21_CS"/>
</dbReference>
<dbReference type="NCBIfam" id="TIGR00061">
    <property type="entry name" value="L21"/>
    <property type="match status" value="1"/>
</dbReference>
<dbReference type="PANTHER" id="PTHR21349">
    <property type="entry name" value="50S RIBOSOMAL PROTEIN L21"/>
    <property type="match status" value="1"/>
</dbReference>
<dbReference type="PANTHER" id="PTHR21349:SF0">
    <property type="entry name" value="LARGE RIBOSOMAL SUBUNIT PROTEIN BL21M"/>
    <property type="match status" value="1"/>
</dbReference>
<dbReference type="Pfam" id="PF00829">
    <property type="entry name" value="Ribosomal_L21p"/>
    <property type="match status" value="1"/>
</dbReference>
<dbReference type="SUPFAM" id="SSF141091">
    <property type="entry name" value="L21p-like"/>
    <property type="match status" value="1"/>
</dbReference>
<dbReference type="PROSITE" id="PS01169">
    <property type="entry name" value="RIBOSOMAL_L21"/>
    <property type="match status" value="1"/>
</dbReference>
<protein>
    <recommendedName>
        <fullName evidence="1">Large ribosomal subunit protein bL21</fullName>
    </recommendedName>
    <alternativeName>
        <fullName evidence="2">50S ribosomal protein L21</fullName>
    </alternativeName>
</protein>
<evidence type="ECO:0000255" key="1">
    <source>
        <dbReference type="HAMAP-Rule" id="MF_01363"/>
    </source>
</evidence>
<evidence type="ECO:0000305" key="2"/>
<name>RL21_RUTMC</name>
<accession>A1AXH5</accession>
<keyword id="KW-0687">Ribonucleoprotein</keyword>
<keyword id="KW-0689">Ribosomal protein</keyword>
<keyword id="KW-0694">RNA-binding</keyword>
<keyword id="KW-0699">rRNA-binding</keyword>
<sequence length="103" mass="11791">MYAVIKTGGQQFRVEQGTTLKIEKLEIESGKKVTFKEVLMVADGDNVRVGTPFVPKVTVEAKIISQGKEKKVHILKFRRRKHSMKQQGHRQLFTEIEIVKIKA</sequence>
<feature type="chain" id="PRO_1000067890" description="Large ribosomal subunit protein bL21">
    <location>
        <begin position="1"/>
        <end position="103"/>
    </location>
</feature>
<organism>
    <name type="scientific">Ruthia magnifica subsp. Calyptogena magnifica</name>
    <dbReference type="NCBI Taxonomy" id="413404"/>
    <lineage>
        <taxon>Bacteria</taxon>
        <taxon>Pseudomonadati</taxon>
        <taxon>Pseudomonadota</taxon>
        <taxon>Gammaproteobacteria</taxon>
        <taxon>Candidatus Pseudothioglobaceae</taxon>
        <taxon>Candidatus Ruthturnera</taxon>
    </lineage>
</organism>
<reference key="1">
    <citation type="journal article" date="2007" name="Science">
        <title>The Calyptogena magnifica chemoautotrophic symbiont genome.</title>
        <authorList>
            <person name="Newton I.L.G."/>
            <person name="Woyke T."/>
            <person name="Auchtung T.A."/>
            <person name="Dilly G.F."/>
            <person name="Dutton R.J."/>
            <person name="Fisher M.C."/>
            <person name="Fontanez K.M."/>
            <person name="Lau E."/>
            <person name="Stewart F.J."/>
            <person name="Richardson P.M."/>
            <person name="Barry K.W."/>
            <person name="Saunders E."/>
            <person name="Detter J.C."/>
            <person name="Wu D."/>
            <person name="Eisen J.A."/>
            <person name="Cavanaugh C.M."/>
        </authorList>
    </citation>
    <scope>NUCLEOTIDE SEQUENCE [LARGE SCALE GENOMIC DNA]</scope>
</reference>
<gene>
    <name evidence="1" type="primary">rplU</name>
    <name type="ordered locus">Rmag_0919</name>
</gene>
<proteinExistence type="inferred from homology"/>
<comment type="function">
    <text evidence="1">This protein binds to 23S rRNA in the presence of protein L20.</text>
</comment>
<comment type="subunit">
    <text evidence="1">Part of the 50S ribosomal subunit. Contacts protein L20.</text>
</comment>
<comment type="similarity">
    <text evidence="1">Belongs to the bacterial ribosomal protein bL21 family.</text>
</comment>